<proteinExistence type="predicted"/>
<gene>
    <name type="primary">y03C</name>
    <name type="synonym">46.2</name>
</gene>
<sequence length="87" mass="10268">MTFDEFKNVMMSQHFKCEVKDDIGHKEIIEYWFEPLEVEDNCIKKVTVCTDWAVSFNFNILDNDTPKSLRDMAVSCIKDAYCEVFDI</sequence>
<organism>
    <name type="scientific">Enterobacteria phage T4</name>
    <name type="common">Bacteriophage T4</name>
    <dbReference type="NCBI Taxonomy" id="10665"/>
    <lineage>
        <taxon>Viruses</taxon>
        <taxon>Duplodnaviria</taxon>
        <taxon>Heunggongvirae</taxon>
        <taxon>Uroviricota</taxon>
        <taxon>Caudoviricetes</taxon>
        <taxon>Straboviridae</taxon>
        <taxon>Tevenvirinae</taxon>
        <taxon>Tequatrovirus</taxon>
    </lineage>
</organism>
<dbReference type="EMBL" id="X01804">
    <property type="protein sequence ID" value="CAA25943.1"/>
    <property type="molecule type" value="Genomic_DNA"/>
</dbReference>
<dbReference type="EMBL" id="AF158101">
    <property type="protein sequence ID" value="AAD42474.1"/>
    <property type="molecule type" value="Genomic_DNA"/>
</dbReference>
<dbReference type="PIR" id="T10160">
    <property type="entry name" value="T10160"/>
</dbReference>
<dbReference type="RefSeq" id="NP_049671.1">
    <property type="nucleotide sequence ID" value="NC_000866.4"/>
</dbReference>
<dbReference type="GeneID" id="1258612"/>
<dbReference type="KEGG" id="vg:1258612"/>
<dbReference type="OrthoDB" id="19114at10239"/>
<dbReference type="Proteomes" id="UP000009087">
    <property type="component" value="Segment"/>
</dbReference>
<protein>
    <recommendedName>
        <fullName>Uncharacterized 10.3 kDa protein in Gp46-Gp47 intergenic region</fullName>
    </recommendedName>
    <alternativeName>
        <fullName>ORF F</fullName>
    </alternativeName>
</protein>
<keyword id="KW-1185">Reference proteome</keyword>
<name>Y03C_BPT4</name>
<accession>P13330</accession>
<organismHost>
    <name type="scientific">Escherichia coli</name>
    <dbReference type="NCBI Taxonomy" id="562"/>
</organismHost>
<reference key="1">
    <citation type="journal article" date="1985" name="EMBO J.">
        <title>Genes 55, alpha gt, 47 and 46 of bacteriophage T4: the genomic organization as deduced by sequence analysis.</title>
        <authorList>
            <person name="Gram H."/>
            <person name="Rueger W."/>
        </authorList>
    </citation>
    <scope>NUCLEOTIDE SEQUENCE [GENOMIC DNA]</scope>
</reference>
<reference key="2">
    <citation type="journal article" date="2003" name="Microbiol. Mol. Biol. Rev.">
        <title>Bacteriophage T4 genome.</title>
        <authorList>
            <person name="Miller E.S."/>
            <person name="Kutter E."/>
            <person name="Mosig G."/>
            <person name="Arisaka F."/>
            <person name="Kunisawa T."/>
            <person name="Ruger W."/>
        </authorList>
    </citation>
    <scope>NUCLEOTIDE SEQUENCE [LARGE SCALE GENOMIC DNA]</scope>
</reference>
<feature type="chain" id="PRO_0000165099" description="Uncharacterized 10.3 kDa protein in Gp46-Gp47 intergenic region">
    <location>
        <begin position="1"/>
        <end position="87"/>
    </location>
</feature>